<organism>
    <name type="scientific">Methanothermobacter thermautotrophicus (strain ATCC 29096 / DSM 1053 / JCM 10044 / NBRC 100330 / Delta H)</name>
    <name type="common">Methanobacterium thermoautotrophicum</name>
    <dbReference type="NCBI Taxonomy" id="187420"/>
    <lineage>
        <taxon>Archaea</taxon>
        <taxon>Methanobacteriati</taxon>
        <taxon>Methanobacteriota</taxon>
        <taxon>Methanomada group</taxon>
        <taxon>Methanobacteria</taxon>
        <taxon>Methanobacteriales</taxon>
        <taxon>Methanobacteriaceae</taxon>
        <taxon>Methanothermobacter</taxon>
    </lineage>
</organism>
<dbReference type="EMBL" id="AE000666">
    <property type="protein sequence ID" value="AAB85785.1"/>
    <property type="molecule type" value="Genomic_DNA"/>
</dbReference>
<dbReference type="PIR" id="F69040">
    <property type="entry name" value="F69040"/>
</dbReference>
<dbReference type="SMR" id="O27362"/>
<dbReference type="FunCoup" id="O27362">
    <property type="interactions" value="9"/>
</dbReference>
<dbReference type="STRING" id="187420.MTH_1307"/>
<dbReference type="PaxDb" id="187420-MTH_1307"/>
<dbReference type="EnsemblBacteria" id="AAB85785">
    <property type="protein sequence ID" value="AAB85785"/>
    <property type="gene ID" value="MTH_1307"/>
</dbReference>
<dbReference type="KEGG" id="mth:MTH_1307"/>
<dbReference type="PATRIC" id="fig|187420.15.peg.1276"/>
<dbReference type="HOGENOM" id="CLU_196480_1_0_2"/>
<dbReference type="InParanoid" id="O27362"/>
<dbReference type="Proteomes" id="UP000005223">
    <property type="component" value="Chromosome"/>
</dbReference>
<dbReference type="GO" id="GO:1990904">
    <property type="term" value="C:ribonucleoprotein complex"/>
    <property type="evidence" value="ECO:0007669"/>
    <property type="project" value="UniProtKB-KW"/>
</dbReference>
<dbReference type="GO" id="GO:0030515">
    <property type="term" value="F:snoRNA binding"/>
    <property type="evidence" value="ECO:0007669"/>
    <property type="project" value="InterPro"/>
</dbReference>
<dbReference type="GO" id="GO:0001522">
    <property type="term" value="P:pseudouridine synthesis"/>
    <property type="evidence" value="ECO:0007669"/>
    <property type="project" value="InterPro"/>
</dbReference>
<dbReference type="GO" id="GO:0006364">
    <property type="term" value="P:rRNA processing"/>
    <property type="evidence" value="ECO:0007669"/>
    <property type="project" value="UniProtKB-UniRule"/>
</dbReference>
<dbReference type="Gene3D" id="2.20.28.40">
    <property type="entry name" value="H/ACA ribonucleoprotein complex, subunit Nop10"/>
    <property type="match status" value="1"/>
</dbReference>
<dbReference type="HAMAP" id="MF_00803">
    <property type="entry name" value="Nop10"/>
    <property type="match status" value="1"/>
</dbReference>
<dbReference type="InterPro" id="IPR007264">
    <property type="entry name" value="H/ACA_rnp_Nop10"/>
</dbReference>
<dbReference type="InterPro" id="IPR036756">
    <property type="entry name" value="H/ACA_rnp_Nop10_sf"/>
</dbReference>
<dbReference type="InterPro" id="IPR023532">
    <property type="entry name" value="Nop10_arc-typ"/>
</dbReference>
<dbReference type="NCBIfam" id="NF009623">
    <property type="entry name" value="PRK13130.1"/>
    <property type="match status" value="1"/>
</dbReference>
<dbReference type="PANTHER" id="PTHR13305:SF0">
    <property type="entry name" value="H_ACA RIBONUCLEOPROTEIN COMPLEX SUBUNIT 3"/>
    <property type="match status" value="1"/>
</dbReference>
<dbReference type="PANTHER" id="PTHR13305">
    <property type="entry name" value="RIBOSOME BIOGENESIS PROTEIN NOP10"/>
    <property type="match status" value="1"/>
</dbReference>
<dbReference type="Pfam" id="PF04135">
    <property type="entry name" value="Nop10p"/>
    <property type="match status" value="1"/>
</dbReference>
<dbReference type="SUPFAM" id="SSF144210">
    <property type="entry name" value="Nop10-like SnoRNP"/>
    <property type="match status" value="1"/>
</dbReference>
<feature type="chain" id="PRO_0000149021" description="Ribosome biogenesis protein Nop10">
    <location>
        <begin position="1"/>
        <end position="59"/>
    </location>
</feature>
<evidence type="ECO:0000250" key="1"/>
<evidence type="ECO:0000305" key="2"/>
<gene>
    <name type="primary">nop10</name>
    <name type="ordered locus">MTH_1307</name>
</gene>
<name>NOP10_METTH</name>
<accession>O27362</accession>
<sequence length="59" mass="6820">MKMKRCRSCGEYTLKEVCPHCGGRTGVIYPPKFSPEDKYGAYRRKLKRELYSRGSGESK</sequence>
<proteinExistence type="inferred from homology"/>
<reference key="1">
    <citation type="journal article" date="1997" name="J. Bacteriol.">
        <title>Complete genome sequence of Methanobacterium thermoautotrophicum deltaH: functional analysis and comparative genomics.</title>
        <authorList>
            <person name="Smith D.R."/>
            <person name="Doucette-Stamm L.A."/>
            <person name="Deloughery C."/>
            <person name="Lee H.-M."/>
            <person name="Dubois J."/>
            <person name="Aldredge T."/>
            <person name="Bashirzadeh R."/>
            <person name="Blakely D."/>
            <person name="Cook R."/>
            <person name="Gilbert K."/>
            <person name="Harrison D."/>
            <person name="Hoang L."/>
            <person name="Keagle P."/>
            <person name="Lumm W."/>
            <person name="Pothier B."/>
            <person name="Qiu D."/>
            <person name="Spadafora R."/>
            <person name="Vicare R."/>
            <person name="Wang Y."/>
            <person name="Wierzbowski J."/>
            <person name="Gibson R."/>
            <person name="Jiwani N."/>
            <person name="Caruso A."/>
            <person name="Bush D."/>
            <person name="Safer H."/>
            <person name="Patwell D."/>
            <person name="Prabhakar S."/>
            <person name="McDougall S."/>
            <person name="Shimer G."/>
            <person name="Goyal A."/>
            <person name="Pietrovski S."/>
            <person name="Church G.M."/>
            <person name="Daniels C.J."/>
            <person name="Mao J.-I."/>
            <person name="Rice P."/>
            <person name="Noelling J."/>
            <person name="Reeve J.N."/>
        </authorList>
    </citation>
    <scope>NUCLEOTIDE SEQUENCE [LARGE SCALE GENOMIC DNA]</scope>
    <source>
        <strain>ATCC 29096 / DSM 1053 / JCM 10044 / NBRC 100330 / Delta H</strain>
    </source>
</reference>
<comment type="function">
    <text evidence="1">Involved in ribosome biogenesis; more specifically in 18S rRNA pseudouridylation and in cleavage of pre-rRNA.</text>
</comment>
<comment type="similarity">
    <text evidence="2">Belongs to the NOP10 family.</text>
</comment>
<keyword id="KW-1185">Reference proteome</keyword>
<keyword id="KW-0687">Ribonucleoprotein</keyword>
<keyword id="KW-0690">Ribosome biogenesis</keyword>
<keyword id="KW-0698">rRNA processing</keyword>
<protein>
    <recommendedName>
        <fullName>Ribosome biogenesis protein Nop10</fullName>
    </recommendedName>
</protein>